<comment type="function">
    <text evidence="4">Cytochrome P450 monooxygenase; part of the gene cluster that mediates the biosynthesis of the isocyanide xanthocillin and its derivatives (PubMed:29844112). The first step of the pathway consists in the conversion of tyrosine into a vinyl-isonitrile intermediate by the isocyanide synthase xanB (PubMed:29844112). Subsequent oxidative dimerization of this intermediate to form xanthocillin may involve the cytochrome P450 monooxygenase xanG, whose expression is coregulated with that of XanB (PubMed:29844112). Xanthocillin can be further modified by the isonitrile hydratase-like protein xanA which introduces N-formyl groups and the methyltransferase xanE which introduces methyl groups, leading to the production of several derivatives including fumiformamide (PubMed:29844112). Finally, fumiformamide can be subject to both oxidative and reductive cyclization to yield melanocins E and F, respectively (PubMed:29844112).</text>
</comment>
<comment type="cofactor">
    <cofactor evidence="1">
        <name>heme</name>
        <dbReference type="ChEBI" id="CHEBI:30413"/>
    </cofactor>
</comment>
<comment type="pathway">
    <text evidence="7">Secondary metabolite biosynthesis.</text>
</comment>
<comment type="subcellular location">
    <subcellularLocation>
        <location evidence="2">Membrane</location>
        <topology evidence="2">Single-pass membrane protein</topology>
    </subcellularLocation>
</comment>
<comment type="similarity">
    <text evidence="6">Belongs to the cytochrome P450 family.</text>
</comment>
<reference key="1">
    <citation type="journal article" date="2005" name="Nature">
        <title>Genomic sequence of the pathogenic and allergenic filamentous fungus Aspergillus fumigatus.</title>
        <authorList>
            <person name="Nierman W.C."/>
            <person name="Pain A."/>
            <person name="Anderson M.J."/>
            <person name="Wortman J.R."/>
            <person name="Kim H.S."/>
            <person name="Arroyo J."/>
            <person name="Berriman M."/>
            <person name="Abe K."/>
            <person name="Archer D.B."/>
            <person name="Bermejo C."/>
            <person name="Bennett J.W."/>
            <person name="Bowyer P."/>
            <person name="Chen D."/>
            <person name="Collins M."/>
            <person name="Coulsen R."/>
            <person name="Davies R."/>
            <person name="Dyer P.S."/>
            <person name="Farman M.L."/>
            <person name="Fedorova N."/>
            <person name="Fedorova N.D."/>
            <person name="Feldblyum T.V."/>
            <person name="Fischer R."/>
            <person name="Fosker N."/>
            <person name="Fraser A."/>
            <person name="Garcia J.L."/>
            <person name="Garcia M.J."/>
            <person name="Goble A."/>
            <person name="Goldman G.H."/>
            <person name="Gomi K."/>
            <person name="Griffith-Jones S."/>
            <person name="Gwilliam R."/>
            <person name="Haas B.J."/>
            <person name="Haas H."/>
            <person name="Harris D.E."/>
            <person name="Horiuchi H."/>
            <person name="Huang J."/>
            <person name="Humphray S."/>
            <person name="Jimenez J."/>
            <person name="Keller N."/>
            <person name="Khouri H."/>
            <person name="Kitamoto K."/>
            <person name="Kobayashi T."/>
            <person name="Konzack S."/>
            <person name="Kulkarni R."/>
            <person name="Kumagai T."/>
            <person name="Lafton A."/>
            <person name="Latge J.-P."/>
            <person name="Li W."/>
            <person name="Lord A."/>
            <person name="Lu C."/>
            <person name="Majoros W.H."/>
            <person name="May G.S."/>
            <person name="Miller B.L."/>
            <person name="Mohamoud Y."/>
            <person name="Molina M."/>
            <person name="Monod M."/>
            <person name="Mouyna I."/>
            <person name="Mulligan S."/>
            <person name="Murphy L.D."/>
            <person name="O'Neil S."/>
            <person name="Paulsen I."/>
            <person name="Penalva M.A."/>
            <person name="Pertea M."/>
            <person name="Price C."/>
            <person name="Pritchard B.L."/>
            <person name="Quail M.A."/>
            <person name="Rabbinowitsch E."/>
            <person name="Rawlins N."/>
            <person name="Rajandream M.A."/>
            <person name="Reichard U."/>
            <person name="Renauld H."/>
            <person name="Robson G.D."/>
            <person name="Rodriguez de Cordoba S."/>
            <person name="Rodriguez-Pena J.M."/>
            <person name="Ronning C.M."/>
            <person name="Rutter S."/>
            <person name="Salzberg S.L."/>
            <person name="Sanchez M."/>
            <person name="Sanchez-Ferrero J.C."/>
            <person name="Saunders D."/>
            <person name="Seeger K."/>
            <person name="Squares R."/>
            <person name="Squares S."/>
            <person name="Takeuchi M."/>
            <person name="Tekaia F."/>
            <person name="Turner G."/>
            <person name="Vazquez de Aldana C.R."/>
            <person name="Weidman J."/>
            <person name="White O."/>
            <person name="Woodward J.R."/>
            <person name="Yu J.-H."/>
            <person name="Fraser C.M."/>
            <person name="Galagan J.E."/>
            <person name="Asai K."/>
            <person name="Machida M."/>
            <person name="Hall N."/>
            <person name="Barrell B.G."/>
            <person name="Denning D.W."/>
        </authorList>
    </citation>
    <scope>NUCLEOTIDE SEQUENCE [LARGE SCALE GENOMIC DNA]</scope>
    <source>
        <strain>ATCC MYA-4609 / CBS 101355 / FGSC A1100 / Af293</strain>
    </source>
</reference>
<reference key="2">
    <citation type="journal article" date="2018" name="MBio">
        <title>Fungal isocyanide synthases and xanthocillin biosynthesis in Aspergillus fumigatus.</title>
        <authorList>
            <person name="Lim F.Y."/>
            <person name="Won T.H."/>
            <person name="Raffa N."/>
            <person name="Baccile J.A."/>
            <person name="Wisecaver J."/>
            <person name="Rokas A."/>
            <person name="Schroeder F.C."/>
            <person name="Keller N.P."/>
        </authorList>
    </citation>
    <scope>FUNCTION</scope>
</reference>
<proteinExistence type="inferred from homology"/>
<feature type="chain" id="PRO_0000445298" description="Cytochrome P450 monooxygenase xanG">
    <location>
        <begin position="1"/>
        <end position="538"/>
    </location>
</feature>
<feature type="transmembrane region" description="Helical" evidence="2">
    <location>
        <begin position="44"/>
        <end position="64"/>
    </location>
</feature>
<feature type="binding site" description="axial binding residue" evidence="1">
    <location>
        <position position="489"/>
    </location>
    <ligand>
        <name>heme</name>
        <dbReference type="ChEBI" id="CHEBI:30413"/>
    </ligand>
    <ligandPart>
        <name>Fe</name>
        <dbReference type="ChEBI" id="CHEBI:18248"/>
    </ligandPart>
</feature>
<feature type="glycosylation site" description="N-linked (GlcNAc...) asparagine" evidence="3">
    <location>
        <position position="378"/>
    </location>
</feature>
<accession>Q4WED5</accession>
<sequence>MTWMRVMPRCQNRTYKRPRGPPLSIHPLEFFQAKKVEKTAKAKMILYYLASIPLAIICYLAWYLHVPWDLPSLPRIPFYVSILGLWSSMGQDEIYERWLRKPLEAHGAVLIWFAGRWSILVTRPDLLTDMFRNEDLYAKAGSQKKIPWSVIATLVGDNIINSHGDTWKLYTGIMKPGLQKKNFDTAPLLLKSRRFVDEILAEQNSAGRGTGILVNTFVQQWAVDVMGMSFLDLDLQSLEKPHGTVRLEAIQSVIKLMLFRPLFFNFPDLDQFAWLIKSRQRAYEIMHEFGDTLMATVLGRIDSDREKGIKPAEEMVVHMLVDAYRDGRLTEKQFKDNLKIVFLTAHENAQQLVNSMFWEIGKNNEVQTRLRAEILSTNTTTPTSEVVNALPYLTAVVYELLRLYPPVSQLINRVTVRPAMLGNEIPIPAGTFVGWNAYGVHVNPAIWGPDANEFKPERWGRTVGEMHARFRRETVRGTYIPFNAHSRKCLGQGFVLLQMKILLFEVLRRIEWTVDPGYRLKMTPVSYFLESGRKSTDA</sequence>
<dbReference type="EC" id="1.14.-.-" evidence="7"/>
<dbReference type="EMBL" id="AAHF01000011">
    <property type="protein sequence ID" value="EAL86042.1"/>
    <property type="molecule type" value="Genomic_DNA"/>
</dbReference>
<dbReference type="RefSeq" id="XP_748080.1">
    <property type="nucleotide sequence ID" value="XM_742987.1"/>
</dbReference>
<dbReference type="SMR" id="Q4WED5"/>
<dbReference type="FunCoup" id="Q4WED5">
    <property type="interactions" value="1483"/>
</dbReference>
<dbReference type="STRING" id="330879.Q4WED5"/>
<dbReference type="GlyCosmos" id="Q4WED5">
    <property type="glycosylation" value="1 site, No reported glycans"/>
</dbReference>
<dbReference type="EnsemblFungi" id="EAL86042">
    <property type="protein sequence ID" value="EAL86042"/>
    <property type="gene ID" value="AFUA_5G02620"/>
</dbReference>
<dbReference type="GeneID" id="3505488"/>
<dbReference type="KEGG" id="afm:AFUA_5G02620"/>
<dbReference type="VEuPathDB" id="FungiDB:Afu5g02620"/>
<dbReference type="eggNOG" id="KOG0157">
    <property type="taxonomic scope" value="Eukaryota"/>
</dbReference>
<dbReference type="HOGENOM" id="CLU_031576_0_0_1"/>
<dbReference type="InParanoid" id="Q4WED5"/>
<dbReference type="OMA" id="YIPFNAH"/>
<dbReference type="OrthoDB" id="1470350at2759"/>
<dbReference type="Proteomes" id="UP000002530">
    <property type="component" value="Chromosome 5"/>
</dbReference>
<dbReference type="GO" id="GO:0016020">
    <property type="term" value="C:membrane"/>
    <property type="evidence" value="ECO:0007669"/>
    <property type="project" value="UniProtKB-SubCell"/>
</dbReference>
<dbReference type="GO" id="GO:0020037">
    <property type="term" value="F:heme binding"/>
    <property type="evidence" value="ECO:0007669"/>
    <property type="project" value="InterPro"/>
</dbReference>
<dbReference type="GO" id="GO:0005506">
    <property type="term" value="F:iron ion binding"/>
    <property type="evidence" value="ECO:0007669"/>
    <property type="project" value="InterPro"/>
</dbReference>
<dbReference type="GO" id="GO:0004497">
    <property type="term" value="F:monooxygenase activity"/>
    <property type="evidence" value="ECO:0007669"/>
    <property type="project" value="InterPro"/>
</dbReference>
<dbReference type="GO" id="GO:0016705">
    <property type="term" value="F:oxidoreductase activity, acting on paired donors, with incorporation or reduction of molecular oxygen"/>
    <property type="evidence" value="ECO:0007669"/>
    <property type="project" value="InterPro"/>
</dbReference>
<dbReference type="GO" id="GO:0009058">
    <property type="term" value="P:biosynthetic process"/>
    <property type="evidence" value="ECO:0007669"/>
    <property type="project" value="UniProtKB-ARBA"/>
</dbReference>
<dbReference type="CDD" id="cd11070">
    <property type="entry name" value="CYP56-like"/>
    <property type="match status" value="1"/>
</dbReference>
<dbReference type="FunFam" id="1.10.630.10:FF:000223">
    <property type="entry name" value="Sporulation-specific N-formyltyrosine oxidase Dit2, putative"/>
    <property type="match status" value="1"/>
</dbReference>
<dbReference type="Gene3D" id="1.10.630.10">
    <property type="entry name" value="Cytochrome P450"/>
    <property type="match status" value="1"/>
</dbReference>
<dbReference type="InterPro" id="IPR001128">
    <property type="entry name" value="Cyt_P450"/>
</dbReference>
<dbReference type="InterPro" id="IPR002403">
    <property type="entry name" value="Cyt_P450_E_grp-IV"/>
</dbReference>
<dbReference type="InterPro" id="IPR036396">
    <property type="entry name" value="Cyt_P450_sf"/>
</dbReference>
<dbReference type="InterPro" id="IPR050121">
    <property type="entry name" value="Cytochrome_P450_monoxygenase"/>
</dbReference>
<dbReference type="PANTHER" id="PTHR24305">
    <property type="entry name" value="CYTOCHROME P450"/>
    <property type="match status" value="1"/>
</dbReference>
<dbReference type="PANTHER" id="PTHR24305:SF223">
    <property type="entry name" value="CYTOCHROME P450-DIT2"/>
    <property type="match status" value="1"/>
</dbReference>
<dbReference type="Pfam" id="PF00067">
    <property type="entry name" value="p450"/>
    <property type="match status" value="1"/>
</dbReference>
<dbReference type="PRINTS" id="PR00465">
    <property type="entry name" value="EP450IV"/>
</dbReference>
<dbReference type="PRINTS" id="PR00385">
    <property type="entry name" value="P450"/>
</dbReference>
<dbReference type="SUPFAM" id="SSF48264">
    <property type="entry name" value="Cytochrome P450"/>
    <property type="match status" value="1"/>
</dbReference>
<evidence type="ECO:0000250" key="1">
    <source>
        <dbReference type="UniProtKB" id="P04798"/>
    </source>
</evidence>
<evidence type="ECO:0000255" key="2"/>
<evidence type="ECO:0000255" key="3">
    <source>
        <dbReference type="PROSITE-ProRule" id="PRU00498"/>
    </source>
</evidence>
<evidence type="ECO:0000269" key="4">
    <source>
    </source>
</evidence>
<evidence type="ECO:0000303" key="5">
    <source>
    </source>
</evidence>
<evidence type="ECO:0000305" key="6"/>
<evidence type="ECO:0000305" key="7">
    <source>
    </source>
</evidence>
<organism>
    <name type="scientific">Aspergillus fumigatus (strain ATCC MYA-4609 / CBS 101355 / FGSC A1100 / Af293)</name>
    <name type="common">Neosartorya fumigata</name>
    <dbReference type="NCBI Taxonomy" id="330879"/>
    <lineage>
        <taxon>Eukaryota</taxon>
        <taxon>Fungi</taxon>
        <taxon>Dikarya</taxon>
        <taxon>Ascomycota</taxon>
        <taxon>Pezizomycotina</taxon>
        <taxon>Eurotiomycetes</taxon>
        <taxon>Eurotiomycetidae</taxon>
        <taxon>Eurotiales</taxon>
        <taxon>Aspergillaceae</taxon>
        <taxon>Aspergillus</taxon>
        <taxon>Aspergillus subgen. Fumigati</taxon>
    </lineage>
</organism>
<name>XANG_ASPFU</name>
<gene>
    <name evidence="5" type="primary">xanG</name>
    <name type="ORF">AFUA_5G02620</name>
</gene>
<keyword id="KW-0325">Glycoprotein</keyword>
<keyword id="KW-0408">Iron</keyword>
<keyword id="KW-0472">Membrane</keyword>
<keyword id="KW-0479">Metal-binding</keyword>
<keyword id="KW-0560">Oxidoreductase</keyword>
<keyword id="KW-1185">Reference proteome</keyword>
<keyword id="KW-0812">Transmembrane</keyword>
<keyword id="KW-1133">Transmembrane helix</keyword>
<protein>
    <recommendedName>
        <fullName evidence="5">Cytochrome P450 monooxygenase xanG</fullName>
        <ecNumber evidence="7">1.14.-.-</ecNumber>
    </recommendedName>
    <alternativeName>
        <fullName evidence="5">Xanthocillin biosynthesis cluster protein G</fullName>
    </alternativeName>
</protein>